<name>CTRC_NEIMA</name>
<accession>P57012</accession>
<accession>A1IP51</accession>
<reference key="1">
    <citation type="journal article" date="2000" name="Nature">
        <title>Complete DNA sequence of a serogroup A strain of Neisseria meningitidis Z2491.</title>
        <authorList>
            <person name="Parkhill J."/>
            <person name="Achtman M."/>
            <person name="James K.D."/>
            <person name="Bentley S.D."/>
            <person name="Churcher C.M."/>
            <person name="Klee S.R."/>
            <person name="Morelli G."/>
            <person name="Basham D."/>
            <person name="Brown D."/>
            <person name="Chillingworth T."/>
            <person name="Davies R.M."/>
            <person name="Davis P."/>
            <person name="Devlin K."/>
            <person name="Feltwell T."/>
            <person name="Hamlin N."/>
            <person name="Holroyd S."/>
            <person name="Jagels K."/>
            <person name="Leather S."/>
            <person name="Moule S."/>
            <person name="Mungall K.L."/>
            <person name="Quail M.A."/>
            <person name="Rajandream M.A."/>
            <person name="Rutherford K.M."/>
            <person name="Simmonds M."/>
            <person name="Skelton J."/>
            <person name="Whitehead S."/>
            <person name="Spratt B.G."/>
            <person name="Barrell B.G."/>
        </authorList>
    </citation>
    <scope>NUCLEOTIDE SEQUENCE [LARGE SCALE GENOMIC DNA]</scope>
    <source>
        <strain>DSM 15465 / Z2491</strain>
    </source>
</reference>
<organism>
    <name type="scientific">Neisseria meningitidis serogroup A / serotype 4A (strain DSM 15465 / Z2491)</name>
    <dbReference type="NCBI Taxonomy" id="122587"/>
    <lineage>
        <taxon>Bacteria</taxon>
        <taxon>Pseudomonadati</taxon>
        <taxon>Pseudomonadota</taxon>
        <taxon>Betaproteobacteria</taxon>
        <taxon>Neisseriales</taxon>
        <taxon>Neisseriaceae</taxon>
        <taxon>Neisseria</taxon>
    </lineage>
</organism>
<sequence>MKELHKTSFLESLLIQKRVIGALLMREIITRYGRNNIGFLWLFVEPLLLTLVMVLMWKFFRMHNVSALNIVAFTLTGYPMMMMWRNASNHAIGSISANTSLLYHRNVRVLDTIFARMLLEIAGATIAQVVIMFALVIIGWIDVPADIFYMLLAWLLMAMFAVGLGLVICSVAFHFEPFGKVWSTISFVMMPLSGVFFFVHNLPQQLQHYVLMIPMVHGTEMFRAGYFGDSVTTYENPWYILLCNLVLLLLGLAVVARFSKGVEPQ</sequence>
<gene>
    <name type="primary">ctrC</name>
    <name type="ordered locus">NMA0196</name>
</gene>
<feature type="chain" id="PRO_0000182979" description="Capsule polysaccharide export inner-membrane protein CtrC">
    <location>
        <begin position="1"/>
        <end position="265"/>
    </location>
</feature>
<feature type="transmembrane region" description="Helical" evidence="1">
    <location>
        <begin position="37"/>
        <end position="57"/>
    </location>
</feature>
<feature type="transmembrane region" description="Helical" evidence="1">
    <location>
        <begin position="64"/>
        <end position="84"/>
    </location>
</feature>
<feature type="transmembrane region" description="Helical" evidence="1">
    <location>
        <begin position="121"/>
        <end position="141"/>
    </location>
</feature>
<feature type="transmembrane region" description="Helical" evidence="1">
    <location>
        <begin position="147"/>
        <end position="167"/>
    </location>
</feature>
<feature type="transmembrane region" description="Helical" evidence="1">
    <location>
        <begin position="178"/>
        <end position="198"/>
    </location>
</feature>
<feature type="transmembrane region" description="Helical" evidence="1">
    <location>
        <begin position="236"/>
        <end position="256"/>
    </location>
</feature>
<feature type="domain" description="ABC transmembrane type-2" evidence="2">
    <location>
        <begin position="37"/>
        <end position="258"/>
    </location>
</feature>
<proteinExistence type="inferred from homology"/>
<keyword id="KW-0972">Capsule biogenesis/degradation</keyword>
<keyword id="KW-0997">Cell inner membrane</keyword>
<keyword id="KW-1003">Cell membrane</keyword>
<keyword id="KW-0472">Membrane</keyword>
<keyword id="KW-0625">Polysaccharide transport</keyword>
<keyword id="KW-0762">Sugar transport</keyword>
<keyword id="KW-0812">Transmembrane</keyword>
<keyword id="KW-1133">Transmembrane helix</keyword>
<keyword id="KW-0813">Transport</keyword>
<evidence type="ECO:0000255" key="1"/>
<evidence type="ECO:0000255" key="2">
    <source>
        <dbReference type="PROSITE-ProRule" id="PRU00442"/>
    </source>
</evidence>
<evidence type="ECO:0000305" key="3"/>
<protein>
    <recommendedName>
        <fullName>Capsule polysaccharide export inner-membrane protein CtrC</fullName>
    </recommendedName>
</protein>
<dbReference type="EMBL" id="AL157959">
    <property type="protein sequence ID" value="CAM07510.1"/>
    <property type="molecule type" value="Genomic_DNA"/>
</dbReference>
<dbReference type="PIR" id="G82013">
    <property type="entry name" value="G82013"/>
</dbReference>
<dbReference type="RefSeq" id="WP_002236582.1">
    <property type="nucleotide sequence ID" value="NC_003116.1"/>
</dbReference>
<dbReference type="SMR" id="P57012"/>
<dbReference type="EnsemblBacteria" id="CAM07510">
    <property type="protein sequence ID" value="CAM07510"/>
    <property type="gene ID" value="NMA0196"/>
</dbReference>
<dbReference type="KEGG" id="nma:NMA0196"/>
<dbReference type="HOGENOM" id="CLU_060703_5_1_4"/>
<dbReference type="Proteomes" id="UP000000626">
    <property type="component" value="Chromosome"/>
</dbReference>
<dbReference type="GO" id="GO:0043190">
    <property type="term" value="C:ATP-binding cassette (ABC) transporter complex"/>
    <property type="evidence" value="ECO:0007669"/>
    <property type="project" value="InterPro"/>
</dbReference>
<dbReference type="GO" id="GO:0140359">
    <property type="term" value="F:ABC-type transporter activity"/>
    <property type="evidence" value="ECO:0007669"/>
    <property type="project" value="InterPro"/>
</dbReference>
<dbReference type="GO" id="GO:0015920">
    <property type="term" value="P:lipopolysaccharide transport"/>
    <property type="evidence" value="ECO:0007669"/>
    <property type="project" value="TreeGrafter"/>
</dbReference>
<dbReference type="GO" id="GO:0015774">
    <property type="term" value="P:polysaccharide transport"/>
    <property type="evidence" value="ECO:0007669"/>
    <property type="project" value="UniProtKB-KW"/>
</dbReference>
<dbReference type="InterPro" id="IPR013525">
    <property type="entry name" value="ABC2_TM"/>
</dbReference>
<dbReference type="InterPro" id="IPR047817">
    <property type="entry name" value="ABC2_TM_bact-type"/>
</dbReference>
<dbReference type="InterPro" id="IPR000412">
    <property type="entry name" value="ABC_2_transport"/>
</dbReference>
<dbReference type="PANTHER" id="PTHR30413:SF10">
    <property type="entry name" value="CAPSULE POLYSACCHARIDE EXPORT INNER-MEMBRANE PROTEIN CTRC"/>
    <property type="match status" value="1"/>
</dbReference>
<dbReference type="PANTHER" id="PTHR30413">
    <property type="entry name" value="INNER MEMBRANE TRANSPORT PERMEASE"/>
    <property type="match status" value="1"/>
</dbReference>
<dbReference type="Pfam" id="PF01061">
    <property type="entry name" value="ABC2_membrane"/>
    <property type="match status" value="1"/>
</dbReference>
<dbReference type="PRINTS" id="PR00164">
    <property type="entry name" value="ABC2TRNSPORT"/>
</dbReference>
<dbReference type="PROSITE" id="PS51012">
    <property type="entry name" value="ABC_TM2"/>
    <property type="match status" value="1"/>
</dbReference>
<comment type="function">
    <text>May form an ATP-driven capsule polysaccharide export apparatus, in association with the CtrB and CtrD proteins.</text>
</comment>
<comment type="subcellular location">
    <subcellularLocation>
        <location evidence="3">Cell inner membrane</location>
        <topology evidence="3">Multi-pass membrane protein</topology>
    </subcellularLocation>
</comment>
<comment type="similarity">
    <text evidence="3">Belongs to the ABC-2 integral membrane protein family.</text>
</comment>